<name>MNMA_YERPA</name>
<keyword id="KW-0067">ATP-binding</keyword>
<keyword id="KW-0963">Cytoplasm</keyword>
<keyword id="KW-1015">Disulfide bond</keyword>
<keyword id="KW-0547">Nucleotide-binding</keyword>
<keyword id="KW-0694">RNA-binding</keyword>
<keyword id="KW-0808">Transferase</keyword>
<keyword id="KW-0819">tRNA processing</keyword>
<keyword id="KW-0820">tRNA-binding</keyword>
<proteinExistence type="inferred from homology"/>
<feature type="chain" id="PRO_0000349865" description="tRNA-specific 2-thiouridylase MnmA">
    <location>
        <begin position="1"/>
        <end position="371"/>
    </location>
</feature>
<feature type="region of interest" description="Interaction with target base in tRNA" evidence="1">
    <location>
        <begin position="98"/>
        <end position="100"/>
    </location>
</feature>
<feature type="region of interest" description="Interaction with tRNA" evidence="1">
    <location>
        <begin position="150"/>
        <end position="152"/>
    </location>
</feature>
<feature type="region of interest" description="Interaction with tRNA" evidence="1">
    <location>
        <begin position="312"/>
        <end position="313"/>
    </location>
</feature>
<feature type="active site" description="Nucleophile" evidence="1">
    <location>
        <position position="103"/>
    </location>
</feature>
<feature type="active site" description="Cysteine persulfide intermediate" evidence="1">
    <location>
        <position position="200"/>
    </location>
</feature>
<feature type="binding site" evidence="1">
    <location>
        <begin position="12"/>
        <end position="19"/>
    </location>
    <ligand>
        <name>ATP</name>
        <dbReference type="ChEBI" id="CHEBI:30616"/>
    </ligand>
</feature>
<feature type="binding site" evidence="1">
    <location>
        <position position="38"/>
    </location>
    <ligand>
        <name>ATP</name>
        <dbReference type="ChEBI" id="CHEBI:30616"/>
    </ligand>
</feature>
<feature type="binding site" evidence="1">
    <location>
        <position position="128"/>
    </location>
    <ligand>
        <name>ATP</name>
        <dbReference type="ChEBI" id="CHEBI:30616"/>
    </ligand>
</feature>
<feature type="site" description="Interaction with tRNA" evidence="1">
    <location>
        <position position="129"/>
    </location>
</feature>
<feature type="site" description="Interaction with tRNA" evidence="1">
    <location>
        <position position="345"/>
    </location>
</feature>
<feature type="disulfide bond" description="Alternate" evidence="1">
    <location>
        <begin position="103"/>
        <end position="200"/>
    </location>
</feature>
<accession>Q1C6S0</accession>
<comment type="function">
    <text evidence="1">Catalyzes the 2-thiolation of uridine at the wobble position (U34) of tRNA(Lys), tRNA(Glu) and tRNA(Gln), leading to the formation of s(2)U34, the first step of tRNA-mnm(5)s(2)U34 synthesis. Sulfur is provided by IscS, via a sulfur-relay system. Binds ATP and its substrate tRNAs.</text>
</comment>
<comment type="catalytic activity">
    <reaction evidence="1">
        <text>S-sulfanyl-L-cysteinyl-[protein] + uridine(34) in tRNA + AH2 + ATP = 2-thiouridine(34) in tRNA + L-cysteinyl-[protein] + A + AMP + diphosphate + H(+)</text>
        <dbReference type="Rhea" id="RHEA:47032"/>
        <dbReference type="Rhea" id="RHEA-COMP:10131"/>
        <dbReference type="Rhea" id="RHEA-COMP:11726"/>
        <dbReference type="Rhea" id="RHEA-COMP:11727"/>
        <dbReference type="Rhea" id="RHEA-COMP:11728"/>
        <dbReference type="ChEBI" id="CHEBI:13193"/>
        <dbReference type="ChEBI" id="CHEBI:15378"/>
        <dbReference type="ChEBI" id="CHEBI:17499"/>
        <dbReference type="ChEBI" id="CHEBI:29950"/>
        <dbReference type="ChEBI" id="CHEBI:30616"/>
        <dbReference type="ChEBI" id="CHEBI:33019"/>
        <dbReference type="ChEBI" id="CHEBI:61963"/>
        <dbReference type="ChEBI" id="CHEBI:65315"/>
        <dbReference type="ChEBI" id="CHEBI:87170"/>
        <dbReference type="ChEBI" id="CHEBI:456215"/>
        <dbReference type="EC" id="2.8.1.13"/>
    </reaction>
</comment>
<comment type="subunit">
    <text evidence="1">Interacts with TusE.</text>
</comment>
<comment type="subcellular location">
    <subcellularLocation>
        <location evidence="1">Cytoplasm</location>
    </subcellularLocation>
</comment>
<comment type="similarity">
    <text evidence="1">Belongs to the MnmA/TRMU family.</text>
</comment>
<gene>
    <name evidence="1" type="primary">mnmA</name>
    <name type="ordered locus">YPA_1886</name>
</gene>
<reference key="1">
    <citation type="journal article" date="2006" name="J. Bacteriol.">
        <title>Complete genome sequence of Yersinia pestis strains Antiqua and Nepal516: evidence of gene reduction in an emerging pathogen.</title>
        <authorList>
            <person name="Chain P.S.G."/>
            <person name="Hu P."/>
            <person name="Malfatti S.A."/>
            <person name="Radnedge L."/>
            <person name="Larimer F."/>
            <person name="Vergez L.M."/>
            <person name="Worsham P."/>
            <person name="Chu M.C."/>
            <person name="Andersen G.L."/>
        </authorList>
    </citation>
    <scope>NUCLEOTIDE SEQUENCE [LARGE SCALE GENOMIC DNA]</scope>
    <source>
        <strain>Antiqua</strain>
    </source>
</reference>
<evidence type="ECO:0000255" key="1">
    <source>
        <dbReference type="HAMAP-Rule" id="MF_00144"/>
    </source>
</evidence>
<dbReference type="EC" id="2.8.1.13" evidence="1"/>
<dbReference type="EMBL" id="CP000308">
    <property type="protein sequence ID" value="ABG13852.1"/>
    <property type="molecule type" value="Genomic_DNA"/>
</dbReference>
<dbReference type="RefSeq" id="WP_002210913.1">
    <property type="nucleotide sequence ID" value="NZ_CP009906.1"/>
</dbReference>
<dbReference type="SMR" id="Q1C6S0"/>
<dbReference type="GeneID" id="57976935"/>
<dbReference type="KEGG" id="ypa:YPA_1886"/>
<dbReference type="Proteomes" id="UP000001971">
    <property type="component" value="Chromosome"/>
</dbReference>
<dbReference type="GO" id="GO:0005737">
    <property type="term" value="C:cytoplasm"/>
    <property type="evidence" value="ECO:0007669"/>
    <property type="project" value="UniProtKB-SubCell"/>
</dbReference>
<dbReference type="GO" id="GO:0005524">
    <property type="term" value="F:ATP binding"/>
    <property type="evidence" value="ECO:0007669"/>
    <property type="project" value="UniProtKB-KW"/>
</dbReference>
<dbReference type="GO" id="GO:0000049">
    <property type="term" value="F:tRNA binding"/>
    <property type="evidence" value="ECO:0007669"/>
    <property type="project" value="UniProtKB-KW"/>
</dbReference>
<dbReference type="GO" id="GO:0103016">
    <property type="term" value="F:tRNA-uridine 2-sulfurtransferase activity"/>
    <property type="evidence" value="ECO:0007669"/>
    <property type="project" value="UniProtKB-EC"/>
</dbReference>
<dbReference type="GO" id="GO:0002143">
    <property type="term" value="P:tRNA wobble position uridine thiolation"/>
    <property type="evidence" value="ECO:0007669"/>
    <property type="project" value="TreeGrafter"/>
</dbReference>
<dbReference type="CDD" id="cd01998">
    <property type="entry name" value="MnmA_TRMU-like"/>
    <property type="match status" value="1"/>
</dbReference>
<dbReference type="FunFam" id="2.30.30.280:FF:000001">
    <property type="entry name" value="tRNA-specific 2-thiouridylase MnmA"/>
    <property type="match status" value="1"/>
</dbReference>
<dbReference type="FunFam" id="2.40.30.10:FF:000023">
    <property type="entry name" value="tRNA-specific 2-thiouridylase MnmA"/>
    <property type="match status" value="1"/>
</dbReference>
<dbReference type="FunFam" id="3.40.50.620:FF:000004">
    <property type="entry name" value="tRNA-specific 2-thiouridylase MnmA"/>
    <property type="match status" value="1"/>
</dbReference>
<dbReference type="Gene3D" id="2.30.30.280">
    <property type="entry name" value="Adenine nucleotide alpha hydrolases-like domains"/>
    <property type="match status" value="1"/>
</dbReference>
<dbReference type="Gene3D" id="3.40.50.620">
    <property type="entry name" value="HUPs"/>
    <property type="match status" value="1"/>
</dbReference>
<dbReference type="Gene3D" id="2.40.30.10">
    <property type="entry name" value="Translation factors"/>
    <property type="match status" value="1"/>
</dbReference>
<dbReference type="HAMAP" id="MF_00144">
    <property type="entry name" value="tRNA_thiouridyl_MnmA"/>
    <property type="match status" value="1"/>
</dbReference>
<dbReference type="InterPro" id="IPR004506">
    <property type="entry name" value="MnmA-like"/>
</dbReference>
<dbReference type="InterPro" id="IPR046885">
    <property type="entry name" value="MnmA-like_C"/>
</dbReference>
<dbReference type="InterPro" id="IPR046884">
    <property type="entry name" value="MnmA-like_central"/>
</dbReference>
<dbReference type="InterPro" id="IPR023382">
    <property type="entry name" value="MnmA-like_central_sf"/>
</dbReference>
<dbReference type="InterPro" id="IPR014729">
    <property type="entry name" value="Rossmann-like_a/b/a_fold"/>
</dbReference>
<dbReference type="NCBIfam" id="NF001138">
    <property type="entry name" value="PRK00143.1"/>
    <property type="match status" value="1"/>
</dbReference>
<dbReference type="NCBIfam" id="TIGR00420">
    <property type="entry name" value="trmU"/>
    <property type="match status" value="1"/>
</dbReference>
<dbReference type="PANTHER" id="PTHR11933:SF5">
    <property type="entry name" value="MITOCHONDRIAL TRNA-SPECIFIC 2-THIOURIDYLASE 1"/>
    <property type="match status" value="1"/>
</dbReference>
<dbReference type="PANTHER" id="PTHR11933">
    <property type="entry name" value="TRNA 5-METHYLAMINOMETHYL-2-THIOURIDYLATE -METHYLTRANSFERASE"/>
    <property type="match status" value="1"/>
</dbReference>
<dbReference type="Pfam" id="PF03054">
    <property type="entry name" value="tRNA_Me_trans"/>
    <property type="match status" value="1"/>
</dbReference>
<dbReference type="Pfam" id="PF20258">
    <property type="entry name" value="tRNA_Me_trans_C"/>
    <property type="match status" value="1"/>
</dbReference>
<dbReference type="Pfam" id="PF20259">
    <property type="entry name" value="tRNA_Me_trans_M"/>
    <property type="match status" value="1"/>
</dbReference>
<dbReference type="SUPFAM" id="SSF52402">
    <property type="entry name" value="Adenine nucleotide alpha hydrolases-like"/>
    <property type="match status" value="1"/>
</dbReference>
<protein>
    <recommendedName>
        <fullName evidence="1">tRNA-specific 2-thiouridylase MnmA</fullName>
        <ecNumber evidence="1">2.8.1.13</ecNumber>
    </recommendedName>
</protein>
<sequence>MSDNSQKKVIVGMSGGVDSSVSAYLLQQQGYQVAGLFMKNWEEDDDEEYCSAATDLADAQAVCDKLGMELHTVNFAAEYWDNVFELFLAEYKAGRTPNPDILCNKEIKFKAFLEFAAEDLGADYIATGHYVRRQDVDGKSRLLRGLDGNKDQSYFLYTLSHEQIAQSLFPVGELEKPEVRRIAEQLDLVTAKKKDSTGICFIGERKFRDFLGRYLPAQPGPIMTVDGQLVGKHQGLMYHTLGQRKGLGIGGTKEGGDDPWYVVDKDLDSNTLLVAQGHEHPRLMSVGLVAQQLHWVDRQPVTAPFRCVVKTRYRQQDIPCTVTPLDDERVDVRFDDPVAAVTPGQSAVFYQGEICLGGGIIEQRYPLTNPA</sequence>
<organism>
    <name type="scientific">Yersinia pestis bv. Antiqua (strain Antiqua)</name>
    <dbReference type="NCBI Taxonomy" id="360102"/>
    <lineage>
        <taxon>Bacteria</taxon>
        <taxon>Pseudomonadati</taxon>
        <taxon>Pseudomonadota</taxon>
        <taxon>Gammaproteobacteria</taxon>
        <taxon>Enterobacterales</taxon>
        <taxon>Yersiniaceae</taxon>
        <taxon>Yersinia</taxon>
    </lineage>
</organism>